<proteinExistence type="inferred from homology"/>
<protein>
    <recommendedName>
        <fullName evidence="1">Bifunctional uridylyltransferase/uridylyl-removing enzyme</fullName>
        <shortName evidence="1">UTase/UR</shortName>
    </recommendedName>
    <alternativeName>
        <fullName evidence="1">Bifunctional [protein-PII] modification enzyme</fullName>
    </alternativeName>
    <alternativeName>
        <fullName evidence="1">Bifunctional nitrogen sensor protein</fullName>
    </alternativeName>
    <domain>
        <recommendedName>
            <fullName evidence="1">[Protein-PII] uridylyltransferase</fullName>
            <shortName evidence="1">PII uridylyltransferase</shortName>
            <shortName evidence="1">UTase</shortName>
            <ecNumber evidence="1">2.7.7.59</ecNumber>
        </recommendedName>
    </domain>
    <domain>
        <recommendedName>
            <fullName evidence="1">[Protein-PII]-UMP uridylyl-removing enzyme</fullName>
            <shortName evidence="1">UR</shortName>
            <ecNumber evidence="1">3.1.4.-</ecNumber>
        </recommendedName>
    </domain>
</protein>
<name>GLND_PHEZH</name>
<accession>B4RC79</accession>
<gene>
    <name evidence="1" type="primary">glnD</name>
    <name type="ordered locus">PHZ_c3463</name>
</gene>
<reference key="1">
    <citation type="journal article" date="2008" name="BMC Genomics">
        <title>Complete genome of Phenylobacterium zucineum - a novel facultative intracellular bacterium isolated from human erythroleukemia cell line K562.</title>
        <authorList>
            <person name="Luo Y."/>
            <person name="Xu X."/>
            <person name="Ding Z."/>
            <person name="Liu Z."/>
            <person name="Zhang B."/>
            <person name="Yan Z."/>
            <person name="Sun J."/>
            <person name="Hu S."/>
            <person name="Hu X."/>
        </authorList>
    </citation>
    <scope>NUCLEOTIDE SEQUENCE [LARGE SCALE GENOMIC DNA]</scope>
    <source>
        <strain>HLK1</strain>
    </source>
</reference>
<sequence>MPPRLRPTHLEYVVDGVKLRSQLSAAALEHAGDELAQRRAALEILKNALFRGRMIAKERLENGAGGIETARLLSGVTDEVVSALYDFTTVHVFRARNPTEGERLALMAVGGYGRGTLAPFSDIDLLFVRPYKQTAHAESVIEYMLYALWDLGFKVGHASRTIDECLKLSREDFTIRTSILEARRLTGDEKLAGELVERFRKEVVKGTGAEFVAAKLKERDERHARAGASRYMVEPNVKEGKGGLRDLNTLFWIAQYLHPGESLEKVMHLEIFDRREVRTFIQALDFLWAVRCHLHFATGRPEERLSFDLQPEIARRMGYGDRGDAPAVERFMRRYFLFAKDVGSLTRVFAAKLEADRVKTAPKGISRFIPGRAQKRKPLDEPGFHEVGGRLGVDPEIFEADPVNLLKLFRIADQRNLDLHPDAFTAASRASGLITSAVRRDRHAAKVFLDILARGRDPQRTLALMNEAGVLGRFVPEFGRIVAQMQFNMYHSYTVDEHTLRAVGVIADIAAGRLAEDHPLAVQTMPLIADREALFLAMLLHDTGKGGAGGQELAGARAARQACERLGLERSKIELVAWLVEHHLVMSDYAQKRDVSDPRTVADFARIVQSPERLRLLLVLTVADIRAVGPGVWNGWKGQLMRELYTATEAVFRGGRGSDAAAALKRYQENAAYDARVSLAKADPLAEPWADAMEDAYFTAFSEAEVLAHARLAQQAGGGAAAEGRIRSELNAAEVVVAAADRPRLFVDLAEAITAAGANVMGARVFTSRAGQALDVFYVQDASGQPFGSHDPRALARLAETLACAARGEPVAREPRKPQDLGRTAAFAITPAVMLDNEASETSTVVEASGRDRPGLLAALARTISDAGLSILSAHIDGYGERAVDAFYVVDADGRKLTDARKRNALKSALLAALTKAEAETAQARRTNLQRARASVAR</sequence>
<evidence type="ECO:0000255" key="1">
    <source>
        <dbReference type="HAMAP-Rule" id="MF_00277"/>
    </source>
</evidence>
<evidence type="ECO:0000255" key="2">
    <source>
        <dbReference type="PROSITE-ProRule" id="PRU01175"/>
    </source>
</evidence>
<comment type="function">
    <text evidence="1">Modifies, by uridylylation and deuridylylation, the PII regulatory proteins (GlnB and homologs), in response to the nitrogen status of the cell that GlnD senses through the glutamine level. Under low glutamine levels, catalyzes the conversion of the PII proteins and UTP to PII-UMP and PPi, while under higher glutamine levels, GlnD hydrolyzes PII-UMP to PII and UMP (deuridylylation). Thus, controls uridylylation state and activity of the PII proteins, and plays an important role in the regulation of nitrogen assimilation and metabolism.</text>
</comment>
<comment type="catalytic activity">
    <reaction evidence="1">
        <text>[protein-PII]-L-tyrosine + UTP = [protein-PII]-uridylyl-L-tyrosine + diphosphate</text>
        <dbReference type="Rhea" id="RHEA:13673"/>
        <dbReference type="Rhea" id="RHEA-COMP:12147"/>
        <dbReference type="Rhea" id="RHEA-COMP:12148"/>
        <dbReference type="ChEBI" id="CHEBI:33019"/>
        <dbReference type="ChEBI" id="CHEBI:46398"/>
        <dbReference type="ChEBI" id="CHEBI:46858"/>
        <dbReference type="ChEBI" id="CHEBI:90602"/>
        <dbReference type="EC" id="2.7.7.59"/>
    </reaction>
</comment>
<comment type="catalytic activity">
    <reaction evidence="1">
        <text>[protein-PII]-uridylyl-L-tyrosine + H2O = [protein-PII]-L-tyrosine + UMP + H(+)</text>
        <dbReference type="Rhea" id="RHEA:48600"/>
        <dbReference type="Rhea" id="RHEA-COMP:12147"/>
        <dbReference type="Rhea" id="RHEA-COMP:12148"/>
        <dbReference type="ChEBI" id="CHEBI:15377"/>
        <dbReference type="ChEBI" id="CHEBI:15378"/>
        <dbReference type="ChEBI" id="CHEBI:46858"/>
        <dbReference type="ChEBI" id="CHEBI:57865"/>
        <dbReference type="ChEBI" id="CHEBI:90602"/>
    </reaction>
</comment>
<comment type="cofactor">
    <cofactor evidence="1">
        <name>Mg(2+)</name>
        <dbReference type="ChEBI" id="CHEBI:18420"/>
    </cofactor>
</comment>
<comment type="activity regulation">
    <text evidence="1">Uridylyltransferase (UTase) activity is inhibited by glutamine, while glutamine activates uridylyl-removing (UR) activity.</text>
</comment>
<comment type="domain">
    <text evidence="1">Has four distinct domains: an N-terminal nucleotidyltransferase (NT) domain responsible for UTase activity, a central HD domain that encodes UR activity, and two C-terminal ACT domains that seem to have a role in glutamine sensing.</text>
</comment>
<comment type="similarity">
    <text evidence="1">Belongs to the GlnD family.</text>
</comment>
<feature type="chain" id="PRO_1000114757" description="Bifunctional uridylyltransferase/uridylyl-removing enzyme">
    <location>
        <begin position="1"/>
        <end position="938"/>
    </location>
</feature>
<feature type="domain" description="HD" evidence="2">
    <location>
        <begin position="495"/>
        <end position="617"/>
    </location>
</feature>
<feature type="domain" description="ACT 1" evidence="1">
    <location>
        <begin position="734"/>
        <end position="813"/>
    </location>
</feature>
<feature type="domain" description="ACT 2" evidence="1">
    <location>
        <begin position="845"/>
        <end position="924"/>
    </location>
</feature>
<feature type="region of interest" description="Uridylyltransferase">
    <location>
        <begin position="1"/>
        <end position="379"/>
    </location>
</feature>
<feature type="region of interest" description="Uridylyl-removing">
    <location>
        <begin position="380"/>
        <end position="733"/>
    </location>
</feature>
<dbReference type="EC" id="2.7.7.59" evidence="1"/>
<dbReference type="EC" id="3.1.4.-" evidence="1"/>
<dbReference type="EMBL" id="CP000747">
    <property type="protein sequence ID" value="ACG79872.1"/>
    <property type="molecule type" value="Genomic_DNA"/>
</dbReference>
<dbReference type="RefSeq" id="WP_012524010.1">
    <property type="nucleotide sequence ID" value="NC_011144.1"/>
</dbReference>
<dbReference type="SMR" id="B4RC79"/>
<dbReference type="STRING" id="450851.PHZ_c3463"/>
<dbReference type="KEGG" id="pzu:PHZ_c3463"/>
<dbReference type="eggNOG" id="COG2844">
    <property type="taxonomic scope" value="Bacteria"/>
</dbReference>
<dbReference type="HOGENOM" id="CLU_012833_1_0_5"/>
<dbReference type="OrthoDB" id="9758038at2"/>
<dbReference type="Proteomes" id="UP000001868">
    <property type="component" value="Chromosome"/>
</dbReference>
<dbReference type="GO" id="GO:0008773">
    <property type="term" value="F:[protein-PII] uridylyltransferase activity"/>
    <property type="evidence" value="ECO:0007669"/>
    <property type="project" value="UniProtKB-UniRule"/>
</dbReference>
<dbReference type="GO" id="GO:0008081">
    <property type="term" value="F:phosphoric diester hydrolase activity"/>
    <property type="evidence" value="ECO:0007669"/>
    <property type="project" value="UniProtKB-UniRule"/>
</dbReference>
<dbReference type="GO" id="GO:0006808">
    <property type="term" value="P:regulation of nitrogen utilization"/>
    <property type="evidence" value="ECO:0007669"/>
    <property type="project" value="UniProtKB-UniRule"/>
</dbReference>
<dbReference type="CDD" id="cd04899">
    <property type="entry name" value="ACT_ACR-UUR-like_2"/>
    <property type="match status" value="1"/>
</dbReference>
<dbReference type="CDD" id="cd04900">
    <property type="entry name" value="ACT_UUR-like_1"/>
    <property type="match status" value="1"/>
</dbReference>
<dbReference type="CDD" id="cd05401">
    <property type="entry name" value="NT_GlnE_GlnD_like"/>
    <property type="match status" value="1"/>
</dbReference>
<dbReference type="Gene3D" id="3.30.70.260">
    <property type="match status" value="1"/>
</dbReference>
<dbReference type="Gene3D" id="3.30.460.10">
    <property type="entry name" value="Beta Polymerase, domain 2"/>
    <property type="match status" value="1"/>
</dbReference>
<dbReference type="Gene3D" id="1.10.3090.10">
    <property type="entry name" value="cca-adding enzyme, domain 2"/>
    <property type="match status" value="1"/>
</dbReference>
<dbReference type="Gene3D" id="1.20.120.330">
    <property type="entry name" value="Nucleotidyltransferases domain 2"/>
    <property type="match status" value="1"/>
</dbReference>
<dbReference type="HAMAP" id="MF_00277">
    <property type="entry name" value="PII_uridylyl_transf"/>
    <property type="match status" value="1"/>
</dbReference>
<dbReference type="InterPro" id="IPR045865">
    <property type="entry name" value="ACT-like_dom_sf"/>
</dbReference>
<dbReference type="InterPro" id="IPR002912">
    <property type="entry name" value="ACT_dom"/>
</dbReference>
<dbReference type="InterPro" id="IPR003607">
    <property type="entry name" value="HD/PDEase_dom"/>
</dbReference>
<dbReference type="InterPro" id="IPR006674">
    <property type="entry name" value="HD_domain"/>
</dbReference>
<dbReference type="InterPro" id="IPR043519">
    <property type="entry name" value="NT_sf"/>
</dbReference>
<dbReference type="InterPro" id="IPR013546">
    <property type="entry name" value="PII_UdlTrfase/GS_AdlTrfase"/>
</dbReference>
<dbReference type="InterPro" id="IPR010043">
    <property type="entry name" value="UTase/UR"/>
</dbReference>
<dbReference type="NCBIfam" id="NF003467">
    <property type="entry name" value="PRK05092.1"/>
    <property type="match status" value="1"/>
</dbReference>
<dbReference type="NCBIfam" id="TIGR01693">
    <property type="entry name" value="UTase_glnD"/>
    <property type="match status" value="1"/>
</dbReference>
<dbReference type="PANTHER" id="PTHR47320">
    <property type="entry name" value="BIFUNCTIONAL URIDYLYLTRANSFERASE/URIDYLYL-REMOVING ENZYME"/>
    <property type="match status" value="1"/>
</dbReference>
<dbReference type="PANTHER" id="PTHR47320:SF1">
    <property type="entry name" value="BIFUNCTIONAL URIDYLYLTRANSFERASE_URIDYLYL-REMOVING ENZYME"/>
    <property type="match status" value="1"/>
</dbReference>
<dbReference type="Pfam" id="PF01842">
    <property type="entry name" value="ACT"/>
    <property type="match status" value="1"/>
</dbReference>
<dbReference type="Pfam" id="PF08335">
    <property type="entry name" value="GlnD_UR_UTase"/>
    <property type="match status" value="1"/>
</dbReference>
<dbReference type="Pfam" id="PF01966">
    <property type="entry name" value="HD"/>
    <property type="match status" value="1"/>
</dbReference>
<dbReference type="PIRSF" id="PIRSF006288">
    <property type="entry name" value="PII_uridyltransf"/>
    <property type="match status" value="1"/>
</dbReference>
<dbReference type="SMART" id="SM00471">
    <property type="entry name" value="HDc"/>
    <property type="match status" value="1"/>
</dbReference>
<dbReference type="SUPFAM" id="SSF55021">
    <property type="entry name" value="ACT-like"/>
    <property type="match status" value="2"/>
</dbReference>
<dbReference type="SUPFAM" id="SSF81301">
    <property type="entry name" value="Nucleotidyltransferase"/>
    <property type="match status" value="1"/>
</dbReference>
<dbReference type="SUPFAM" id="SSF81593">
    <property type="entry name" value="Nucleotidyltransferase substrate binding subunit/domain"/>
    <property type="match status" value="1"/>
</dbReference>
<dbReference type="SUPFAM" id="SSF81891">
    <property type="entry name" value="Poly A polymerase C-terminal region-like"/>
    <property type="match status" value="1"/>
</dbReference>
<dbReference type="PROSITE" id="PS51671">
    <property type="entry name" value="ACT"/>
    <property type="match status" value="2"/>
</dbReference>
<dbReference type="PROSITE" id="PS51831">
    <property type="entry name" value="HD"/>
    <property type="match status" value="1"/>
</dbReference>
<keyword id="KW-0378">Hydrolase</keyword>
<keyword id="KW-0460">Magnesium</keyword>
<keyword id="KW-0511">Multifunctional enzyme</keyword>
<keyword id="KW-0548">Nucleotidyltransferase</keyword>
<keyword id="KW-1185">Reference proteome</keyword>
<keyword id="KW-0677">Repeat</keyword>
<keyword id="KW-0808">Transferase</keyword>
<organism>
    <name type="scientific">Phenylobacterium zucineum (strain HLK1)</name>
    <dbReference type="NCBI Taxonomy" id="450851"/>
    <lineage>
        <taxon>Bacteria</taxon>
        <taxon>Pseudomonadati</taxon>
        <taxon>Pseudomonadota</taxon>
        <taxon>Alphaproteobacteria</taxon>
        <taxon>Caulobacterales</taxon>
        <taxon>Caulobacteraceae</taxon>
        <taxon>Phenylobacterium</taxon>
    </lineage>
</organism>